<evidence type="ECO:0000255" key="1">
    <source>
        <dbReference type="HAMAP-Rule" id="MF_00326"/>
    </source>
</evidence>
<evidence type="ECO:0000305" key="2"/>
<proteinExistence type="inferred from homology"/>
<comment type="function">
    <text evidence="1">Multifunctional RNA-binding protein that recognizes the K-turn motif in ribosomal RNA, the RNA component of RNase P, box H/ACA, box C/D and box C'/D' sRNAs.</text>
</comment>
<comment type="subunit">
    <text evidence="1">Part of the 50S ribosomal subunit. Probably part of the RNase P complex.</text>
</comment>
<comment type="subcellular location">
    <subcellularLocation>
        <location evidence="1">Cytoplasm</location>
    </subcellularLocation>
</comment>
<comment type="similarity">
    <text evidence="1">Belongs to the eukaryotic ribosomal protein eL8 family.</text>
</comment>
<reference key="1">
    <citation type="journal article" date="2002" name="Proc. Natl. Acad. Sci. U.S.A.">
        <title>Genome sequence of the hyperthermophilic crenarchaeon Pyrobaculum aerophilum.</title>
        <authorList>
            <person name="Fitz-Gibbon S.T."/>
            <person name="Ladner H."/>
            <person name="Kim U.-J."/>
            <person name="Stetter K.O."/>
            <person name="Simon M.I."/>
            <person name="Miller J.H."/>
        </authorList>
    </citation>
    <scope>NUCLEOTIDE SEQUENCE [LARGE SCALE GENOMIC DNA]</scope>
    <source>
        <strain>ATCC 51768 / DSM 7523 / JCM 9630 / CIP 104966 / NBRC 100827 / IM2</strain>
    </source>
</reference>
<organism>
    <name type="scientific">Pyrobaculum aerophilum (strain ATCC 51768 / DSM 7523 / JCM 9630 / CIP 104966 / NBRC 100827 / IM2)</name>
    <dbReference type="NCBI Taxonomy" id="178306"/>
    <lineage>
        <taxon>Archaea</taxon>
        <taxon>Thermoproteota</taxon>
        <taxon>Thermoprotei</taxon>
        <taxon>Thermoproteales</taxon>
        <taxon>Thermoproteaceae</taxon>
        <taxon>Pyrobaculum</taxon>
    </lineage>
</organism>
<keyword id="KW-0963">Cytoplasm</keyword>
<keyword id="KW-1185">Reference proteome</keyword>
<keyword id="KW-0687">Ribonucleoprotein</keyword>
<keyword id="KW-0689">Ribosomal protein</keyword>
<keyword id="KW-0694">RNA-binding</keyword>
<keyword id="KW-0699">rRNA-binding</keyword>
<keyword id="KW-0819">tRNA processing</keyword>
<protein>
    <recommendedName>
        <fullName evidence="1">Large ribosomal subunit protein eL8</fullName>
    </recommendedName>
    <alternativeName>
        <fullName evidence="2">50S ribosomal protein L7Ae</fullName>
    </alternativeName>
    <alternativeName>
        <fullName evidence="1">Ribosomal protein L8e</fullName>
    </alternativeName>
</protein>
<feature type="chain" id="PRO_0000136801" description="Large ribosomal subunit protein eL8">
    <location>
        <begin position="1"/>
        <end position="151"/>
    </location>
</feature>
<accession>Q8ZTA5</accession>
<sequence>MAVTIDPKTFYANPPPGKPFYVRFEVPNDVAEKALEILSIARQTGKIKKGTNETTKAVERGLAKLVLIAEDVDPPEVVAHLPLLCEEKKVPYVYVPSKEKLGKAAGINVSAAAAVVIEPGQAAGELEALVSKINEVRAKHGLNAIPVPAKR</sequence>
<gene>
    <name evidence="1" type="primary">rpl7ae</name>
    <name type="ordered locus">PAE3347</name>
</gene>
<dbReference type="EMBL" id="AE009441">
    <property type="protein sequence ID" value="AAL64858.1"/>
    <property type="molecule type" value="Genomic_DNA"/>
</dbReference>
<dbReference type="RefSeq" id="WP_011009325.1">
    <property type="nucleotide sequence ID" value="NC_003364.1"/>
</dbReference>
<dbReference type="SMR" id="Q8ZTA5"/>
<dbReference type="FunCoup" id="Q8ZTA5">
    <property type="interactions" value="199"/>
</dbReference>
<dbReference type="STRING" id="178306.PAE3347"/>
<dbReference type="EnsemblBacteria" id="AAL64858">
    <property type="protein sequence ID" value="AAL64858"/>
    <property type="gene ID" value="PAE3347"/>
</dbReference>
<dbReference type="GeneID" id="1464048"/>
<dbReference type="KEGG" id="pai:PAE3347"/>
<dbReference type="PATRIC" id="fig|178306.9.peg.2522"/>
<dbReference type="eggNOG" id="arCOG01751">
    <property type="taxonomic scope" value="Archaea"/>
</dbReference>
<dbReference type="HOGENOM" id="CLU_084513_4_0_2"/>
<dbReference type="InParanoid" id="Q8ZTA5"/>
<dbReference type="Proteomes" id="UP000002439">
    <property type="component" value="Chromosome"/>
</dbReference>
<dbReference type="GO" id="GO:0005737">
    <property type="term" value="C:cytoplasm"/>
    <property type="evidence" value="ECO:0007669"/>
    <property type="project" value="UniProtKB-SubCell"/>
</dbReference>
<dbReference type="GO" id="GO:1990904">
    <property type="term" value="C:ribonucleoprotein complex"/>
    <property type="evidence" value="ECO:0007669"/>
    <property type="project" value="UniProtKB-KW"/>
</dbReference>
<dbReference type="GO" id="GO:0005840">
    <property type="term" value="C:ribosome"/>
    <property type="evidence" value="ECO:0007669"/>
    <property type="project" value="UniProtKB-KW"/>
</dbReference>
<dbReference type="GO" id="GO:0004526">
    <property type="term" value="F:ribonuclease P activity"/>
    <property type="evidence" value="ECO:0007669"/>
    <property type="project" value="UniProtKB-UniRule"/>
</dbReference>
<dbReference type="GO" id="GO:0019843">
    <property type="term" value="F:rRNA binding"/>
    <property type="evidence" value="ECO:0007669"/>
    <property type="project" value="UniProtKB-KW"/>
</dbReference>
<dbReference type="GO" id="GO:0003735">
    <property type="term" value="F:structural constituent of ribosome"/>
    <property type="evidence" value="ECO:0007669"/>
    <property type="project" value="InterPro"/>
</dbReference>
<dbReference type="GO" id="GO:0042254">
    <property type="term" value="P:ribosome biogenesis"/>
    <property type="evidence" value="ECO:0007669"/>
    <property type="project" value="InterPro"/>
</dbReference>
<dbReference type="GO" id="GO:0006412">
    <property type="term" value="P:translation"/>
    <property type="evidence" value="ECO:0007669"/>
    <property type="project" value="UniProtKB-UniRule"/>
</dbReference>
<dbReference type="GO" id="GO:0001682">
    <property type="term" value="P:tRNA 5'-leader removal"/>
    <property type="evidence" value="ECO:0007669"/>
    <property type="project" value="UniProtKB-UniRule"/>
</dbReference>
<dbReference type="FunFam" id="3.30.1330.30:FF:000020">
    <property type="entry name" value="50S ribosomal protein L7Ae"/>
    <property type="match status" value="1"/>
</dbReference>
<dbReference type="Gene3D" id="3.30.1330.30">
    <property type="match status" value="1"/>
</dbReference>
<dbReference type="HAMAP" id="MF_00326">
    <property type="entry name" value="Ribosomal_eL8"/>
    <property type="match status" value="1"/>
</dbReference>
<dbReference type="InterPro" id="IPR050257">
    <property type="entry name" value="eL8/uL1-like"/>
</dbReference>
<dbReference type="InterPro" id="IPR029064">
    <property type="entry name" value="Ribosomal_eL30-like_sf"/>
</dbReference>
<dbReference type="InterPro" id="IPR004037">
    <property type="entry name" value="Ribosomal_eL8-like_CS"/>
</dbReference>
<dbReference type="InterPro" id="IPR004038">
    <property type="entry name" value="Ribosomal_eL8/eL30/eS12/Gad45"/>
</dbReference>
<dbReference type="InterPro" id="IPR018492">
    <property type="entry name" value="Ribosomal_eL8/Nhp2"/>
</dbReference>
<dbReference type="InterPro" id="IPR022481">
    <property type="entry name" value="Ribosomal_eL8_arc"/>
</dbReference>
<dbReference type="NCBIfam" id="TIGR03677">
    <property type="entry name" value="eL8_ribo"/>
    <property type="match status" value="1"/>
</dbReference>
<dbReference type="PANTHER" id="PTHR23105">
    <property type="entry name" value="RIBOSOMAL PROTEIN L7AE FAMILY MEMBER"/>
    <property type="match status" value="1"/>
</dbReference>
<dbReference type="Pfam" id="PF01248">
    <property type="entry name" value="Ribosomal_L7Ae"/>
    <property type="match status" value="1"/>
</dbReference>
<dbReference type="PRINTS" id="PR00881">
    <property type="entry name" value="L7ARS6FAMILY"/>
</dbReference>
<dbReference type="PRINTS" id="PR00884">
    <property type="entry name" value="RIBOSOMALHS6"/>
</dbReference>
<dbReference type="SUPFAM" id="SSF55315">
    <property type="entry name" value="L30e-like"/>
    <property type="match status" value="1"/>
</dbReference>
<dbReference type="PROSITE" id="PS01082">
    <property type="entry name" value="RIBOSOMAL_L7AE"/>
    <property type="match status" value="1"/>
</dbReference>
<name>RL7A_PYRAE</name>